<sequence>MARYIGPKCKLSRREGTDLFLKSGVRALESKCNIEAAPGIHGQRRGRQSDYGTQLREKQKVRRIYGVLERQFRGYYQAAASKKGATGENLLQMLECRLDNVVYRMGFGSTRSESRQLVSHKAISVNGKTVNIPSYQVRPGDVVSVREKSLNQLRIVQALELCAQRGRVEWVDVDAAKKSGVFKNVPARSDLSADINENLIVELYSK</sequence>
<comment type="function">
    <text evidence="1">One of the primary rRNA binding proteins, it binds directly to 16S rRNA where it nucleates assembly of the body of the 30S subunit.</text>
</comment>
<comment type="function">
    <text evidence="1">With S5 and S12 plays an important role in translational accuracy.</text>
</comment>
<comment type="subunit">
    <text evidence="1">Part of the 30S ribosomal subunit. Contacts protein S5. The interaction surface between S4 and S5 is involved in control of translational fidelity.</text>
</comment>
<comment type="similarity">
    <text evidence="1">Belongs to the universal ribosomal protein uS4 family.</text>
</comment>
<name>RS4_PSEE4</name>
<dbReference type="EMBL" id="CT573326">
    <property type="protein sequence ID" value="CAK13460.1"/>
    <property type="molecule type" value="Genomic_DNA"/>
</dbReference>
<dbReference type="RefSeq" id="WP_011531898.1">
    <property type="nucleotide sequence ID" value="NC_008027.1"/>
</dbReference>
<dbReference type="SMR" id="Q1IFU2"/>
<dbReference type="STRING" id="384676.PSEEN0513"/>
<dbReference type="GeneID" id="32803848"/>
<dbReference type="KEGG" id="pen:PSEEN0513"/>
<dbReference type="eggNOG" id="COG0522">
    <property type="taxonomic scope" value="Bacteria"/>
</dbReference>
<dbReference type="HOGENOM" id="CLU_092403_0_2_6"/>
<dbReference type="OrthoDB" id="9803672at2"/>
<dbReference type="Proteomes" id="UP000000658">
    <property type="component" value="Chromosome"/>
</dbReference>
<dbReference type="GO" id="GO:0015935">
    <property type="term" value="C:small ribosomal subunit"/>
    <property type="evidence" value="ECO:0007669"/>
    <property type="project" value="InterPro"/>
</dbReference>
<dbReference type="GO" id="GO:0019843">
    <property type="term" value="F:rRNA binding"/>
    <property type="evidence" value="ECO:0007669"/>
    <property type="project" value="UniProtKB-UniRule"/>
</dbReference>
<dbReference type="GO" id="GO:0003735">
    <property type="term" value="F:structural constituent of ribosome"/>
    <property type="evidence" value="ECO:0007669"/>
    <property type="project" value="InterPro"/>
</dbReference>
<dbReference type="GO" id="GO:0042274">
    <property type="term" value="P:ribosomal small subunit biogenesis"/>
    <property type="evidence" value="ECO:0007669"/>
    <property type="project" value="TreeGrafter"/>
</dbReference>
<dbReference type="GO" id="GO:0006412">
    <property type="term" value="P:translation"/>
    <property type="evidence" value="ECO:0007669"/>
    <property type="project" value="UniProtKB-UniRule"/>
</dbReference>
<dbReference type="CDD" id="cd00165">
    <property type="entry name" value="S4"/>
    <property type="match status" value="1"/>
</dbReference>
<dbReference type="FunFam" id="1.10.1050.10:FF:000001">
    <property type="entry name" value="30S ribosomal protein S4"/>
    <property type="match status" value="1"/>
</dbReference>
<dbReference type="FunFam" id="3.10.290.10:FF:000001">
    <property type="entry name" value="30S ribosomal protein S4"/>
    <property type="match status" value="1"/>
</dbReference>
<dbReference type="Gene3D" id="1.10.1050.10">
    <property type="entry name" value="Ribosomal Protein S4 Delta 41, Chain A, domain 1"/>
    <property type="match status" value="1"/>
</dbReference>
<dbReference type="Gene3D" id="3.10.290.10">
    <property type="entry name" value="RNA-binding S4 domain"/>
    <property type="match status" value="1"/>
</dbReference>
<dbReference type="HAMAP" id="MF_01306_B">
    <property type="entry name" value="Ribosomal_uS4_B"/>
    <property type="match status" value="1"/>
</dbReference>
<dbReference type="InterPro" id="IPR022801">
    <property type="entry name" value="Ribosomal_uS4"/>
</dbReference>
<dbReference type="InterPro" id="IPR005709">
    <property type="entry name" value="Ribosomal_uS4_bac-type"/>
</dbReference>
<dbReference type="InterPro" id="IPR018079">
    <property type="entry name" value="Ribosomal_uS4_CS"/>
</dbReference>
<dbReference type="InterPro" id="IPR001912">
    <property type="entry name" value="Ribosomal_uS4_N"/>
</dbReference>
<dbReference type="InterPro" id="IPR002942">
    <property type="entry name" value="S4_RNA-bd"/>
</dbReference>
<dbReference type="InterPro" id="IPR036986">
    <property type="entry name" value="S4_RNA-bd_sf"/>
</dbReference>
<dbReference type="NCBIfam" id="NF003717">
    <property type="entry name" value="PRK05327.1"/>
    <property type="match status" value="1"/>
</dbReference>
<dbReference type="NCBIfam" id="TIGR01017">
    <property type="entry name" value="rpsD_bact"/>
    <property type="match status" value="1"/>
</dbReference>
<dbReference type="PANTHER" id="PTHR11831">
    <property type="entry name" value="30S 40S RIBOSOMAL PROTEIN"/>
    <property type="match status" value="1"/>
</dbReference>
<dbReference type="PANTHER" id="PTHR11831:SF4">
    <property type="entry name" value="SMALL RIBOSOMAL SUBUNIT PROTEIN US4M"/>
    <property type="match status" value="1"/>
</dbReference>
<dbReference type="Pfam" id="PF00163">
    <property type="entry name" value="Ribosomal_S4"/>
    <property type="match status" value="1"/>
</dbReference>
<dbReference type="Pfam" id="PF01479">
    <property type="entry name" value="S4"/>
    <property type="match status" value="1"/>
</dbReference>
<dbReference type="SMART" id="SM01390">
    <property type="entry name" value="Ribosomal_S4"/>
    <property type="match status" value="1"/>
</dbReference>
<dbReference type="SMART" id="SM00363">
    <property type="entry name" value="S4"/>
    <property type="match status" value="1"/>
</dbReference>
<dbReference type="SUPFAM" id="SSF55174">
    <property type="entry name" value="Alpha-L RNA-binding motif"/>
    <property type="match status" value="1"/>
</dbReference>
<dbReference type="PROSITE" id="PS00632">
    <property type="entry name" value="RIBOSOMAL_S4"/>
    <property type="match status" value="1"/>
</dbReference>
<dbReference type="PROSITE" id="PS50889">
    <property type="entry name" value="S4"/>
    <property type="match status" value="1"/>
</dbReference>
<organism>
    <name type="scientific">Pseudomonas entomophila (strain L48)</name>
    <dbReference type="NCBI Taxonomy" id="384676"/>
    <lineage>
        <taxon>Bacteria</taxon>
        <taxon>Pseudomonadati</taxon>
        <taxon>Pseudomonadota</taxon>
        <taxon>Gammaproteobacteria</taxon>
        <taxon>Pseudomonadales</taxon>
        <taxon>Pseudomonadaceae</taxon>
        <taxon>Pseudomonas</taxon>
    </lineage>
</organism>
<keyword id="KW-0687">Ribonucleoprotein</keyword>
<keyword id="KW-0689">Ribosomal protein</keyword>
<keyword id="KW-0694">RNA-binding</keyword>
<keyword id="KW-0699">rRNA-binding</keyword>
<reference key="1">
    <citation type="journal article" date="2006" name="Nat. Biotechnol.">
        <title>Complete genome sequence of the entomopathogenic and metabolically versatile soil bacterium Pseudomonas entomophila.</title>
        <authorList>
            <person name="Vodovar N."/>
            <person name="Vallenet D."/>
            <person name="Cruveiller S."/>
            <person name="Rouy Z."/>
            <person name="Barbe V."/>
            <person name="Acosta C."/>
            <person name="Cattolico L."/>
            <person name="Jubin C."/>
            <person name="Lajus A."/>
            <person name="Segurens B."/>
            <person name="Vacherie B."/>
            <person name="Wincker P."/>
            <person name="Weissenbach J."/>
            <person name="Lemaitre B."/>
            <person name="Medigue C."/>
            <person name="Boccard F."/>
        </authorList>
    </citation>
    <scope>NUCLEOTIDE SEQUENCE [LARGE SCALE GENOMIC DNA]</scope>
    <source>
        <strain>L48</strain>
    </source>
</reference>
<gene>
    <name evidence="1" type="primary">rpsD</name>
    <name type="ordered locus">PSEEN0513</name>
</gene>
<evidence type="ECO:0000255" key="1">
    <source>
        <dbReference type="HAMAP-Rule" id="MF_01306"/>
    </source>
</evidence>
<evidence type="ECO:0000305" key="2"/>
<accession>Q1IFU2</accession>
<feature type="chain" id="PRO_0000293342" description="Small ribosomal subunit protein uS4">
    <location>
        <begin position="1"/>
        <end position="206"/>
    </location>
</feature>
<feature type="domain" description="S4 RNA-binding" evidence="1">
    <location>
        <begin position="96"/>
        <end position="156"/>
    </location>
</feature>
<proteinExistence type="inferred from homology"/>
<protein>
    <recommendedName>
        <fullName evidence="1">Small ribosomal subunit protein uS4</fullName>
    </recommendedName>
    <alternativeName>
        <fullName evidence="2">30S ribosomal protein S4</fullName>
    </alternativeName>
</protein>